<gene>
    <name evidence="1" type="primary">argR</name>
    <name type="ordered locus">MRA_1668</name>
</gene>
<protein>
    <recommendedName>
        <fullName evidence="1">Arginine repressor</fullName>
    </recommendedName>
</protein>
<name>ARGR_MYCTA</name>
<evidence type="ECO:0000255" key="1">
    <source>
        <dbReference type="HAMAP-Rule" id="MF_00173"/>
    </source>
</evidence>
<organism>
    <name type="scientific">Mycobacterium tuberculosis (strain ATCC 25177 / H37Ra)</name>
    <dbReference type="NCBI Taxonomy" id="419947"/>
    <lineage>
        <taxon>Bacteria</taxon>
        <taxon>Bacillati</taxon>
        <taxon>Actinomycetota</taxon>
        <taxon>Actinomycetes</taxon>
        <taxon>Mycobacteriales</taxon>
        <taxon>Mycobacteriaceae</taxon>
        <taxon>Mycobacterium</taxon>
        <taxon>Mycobacterium tuberculosis complex</taxon>
    </lineage>
</organism>
<comment type="function">
    <text evidence="1">Regulates arginine biosynthesis genes.</text>
</comment>
<comment type="pathway">
    <text>Amino-acid biosynthesis; L-arginine biosynthesis [regulation].</text>
</comment>
<comment type="subcellular location">
    <subcellularLocation>
        <location evidence="1">Cytoplasm</location>
    </subcellularLocation>
</comment>
<comment type="similarity">
    <text evidence="1">Belongs to the ArgR family.</text>
</comment>
<dbReference type="EMBL" id="CP000611">
    <property type="protein sequence ID" value="ABQ73414.1"/>
    <property type="molecule type" value="Genomic_DNA"/>
</dbReference>
<dbReference type="RefSeq" id="WP_003408178.1">
    <property type="nucleotide sequence ID" value="NZ_CP016972.1"/>
</dbReference>
<dbReference type="SMR" id="A5U314"/>
<dbReference type="KEGG" id="mra:MRA_1668"/>
<dbReference type="eggNOG" id="COG1438">
    <property type="taxonomic scope" value="Bacteria"/>
</dbReference>
<dbReference type="HOGENOM" id="CLU_097103_1_1_11"/>
<dbReference type="UniPathway" id="UPA00068"/>
<dbReference type="Proteomes" id="UP000001988">
    <property type="component" value="Chromosome"/>
</dbReference>
<dbReference type="GO" id="GO:0005737">
    <property type="term" value="C:cytoplasm"/>
    <property type="evidence" value="ECO:0007669"/>
    <property type="project" value="UniProtKB-SubCell"/>
</dbReference>
<dbReference type="GO" id="GO:0034618">
    <property type="term" value="F:arginine binding"/>
    <property type="evidence" value="ECO:0007669"/>
    <property type="project" value="InterPro"/>
</dbReference>
<dbReference type="GO" id="GO:0003677">
    <property type="term" value="F:DNA binding"/>
    <property type="evidence" value="ECO:0007669"/>
    <property type="project" value="UniProtKB-KW"/>
</dbReference>
<dbReference type="GO" id="GO:0003700">
    <property type="term" value="F:DNA-binding transcription factor activity"/>
    <property type="evidence" value="ECO:0007669"/>
    <property type="project" value="UniProtKB-UniRule"/>
</dbReference>
<dbReference type="GO" id="GO:0006526">
    <property type="term" value="P:L-arginine biosynthetic process"/>
    <property type="evidence" value="ECO:0007669"/>
    <property type="project" value="UniProtKB-UniPathway"/>
</dbReference>
<dbReference type="GO" id="GO:0051259">
    <property type="term" value="P:protein complex oligomerization"/>
    <property type="evidence" value="ECO:0007669"/>
    <property type="project" value="InterPro"/>
</dbReference>
<dbReference type="GO" id="GO:1900079">
    <property type="term" value="P:regulation of arginine biosynthetic process"/>
    <property type="evidence" value="ECO:0007669"/>
    <property type="project" value="UniProtKB-UniRule"/>
</dbReference>
<dbReference type="FunFam" id="1.10.10.10:FF:000667">
    <property type="entry name" value="Arginine repressor"/>
    <property type="match status" value="1"/>
</dbReference>
<dbReference type="FunFam" id="3.30.1360.40:FF:000006">
    <property type="entry name" value="Arginine repressor"/>
    <property type="match status" value="1"/>
</dbReference>
<dbReference type="Gene3D" id="3.30.1360.40">
    <property type="match status" value="1"/>
</dbReference>
<dbReference type="Gene3D" id="1.10.10.10">
    <property type="entry name" value="Winged helix-like DNA-binding domain superfamily/Winged helix DNA-binding domain"/>
    <property type="match status" value="1"/>
</dbReference>
<dbReference type="HAMAP" id="MF_00173">
    <property type="entry name" value="Arg_repressor"/>
    <property type="match status" value="1"/>
</dbReference>
<dbReference type="InterPro" id="IPR001669">
    <property type="entry name" value="Arg_repress"/>
</dbReference>
<dbReference type="InterPro" id="IPR020899">
    <property type="entry name" value="Arg_repress_C"/>
</dbReference>
<dbReference type="InterPro" id="IPR036251">
    <property type="entry name" value="Arg_repress_C_sf"/>
</dbReference>
<dbReference type="InterPro" id="IPR020900">
    <property type="entry name" value="Arg_repress_DNA-bd"/>
</dbReference>
<dbReference type="InterPro" id="IPR036388">
    <property type="entry name" value="WH-like_DNA-bd_sf"/>
</dbReference>
<dbReference type="InterPro" id="IPR036390">
    <property type="entry name" value="WH_DNA-bd_sf"/>
</dbReference>
<dbReference type="NCBIfam" id="TIGR01529">
    <property type="entry name" value="argR_whole"/>
    <property type="match status" value="1"/>
</dbReference>
<dbReference type="NCBIfam" id="NF002880">
    <property type="entry name" value="PRK03341.1"/>
    <property type="match status" value="1"/>
</dbReference>
<dbReference type="PANTHER" id="PTHR34471">
    <property type="entry name" value="ARGININE REPRESSOR"/>
    <property type="match status" value="1"/>
</dbReference>
<dbReference type="PANTHER" id="PTHR34471:SF1">
    <property type="entry name" value="ARGININE REPRESSOR"/>
    <property type="match status" value="1"/>
</dbReference>
<dbReference type="Pfam" id="PF01316">
    <property type="entry name" value="Arg_repressor"/>
    <property type="match status" value="1"/>
</dbReference>
<dbReference type="Pfam" id="PF02863">
    <property type="entry name" value="Arg_repressor_C"/>
    <property type="match status" value="1"/>
</dbReference>
<dbReference type="PRINTS" id="PR01467">
    <property type="entry name" value="ARGREPRESSOR"/>
</dbReference>
<dbReference type="SUPFAM" id="SSF55252">
    <property type="entry name" value="C-terminal domain of arginine repressor"/>
    <property type="match status" value="1"/>
</dbReference>
<dbReference type="SUPFAM" id="SSF46785">
    <property type="entry name" value="Winged helix' DNA-binding domain"/>
    <property type="match status" value="1"/>
</dbReference>
<proteinExistence type="inferred from homology"/>
<sequence length="170" mass="17350">MSRAKAAPVAGPEVAANRAGRQARIVAILSSAQVRSQNELAALLAAEGIEVTQATLSRDLEELGAVKLRGADGGTGIYVVPEDGSPVRGVSGGTDRMARLLGELLVSTDDSGNLAVLRTPPGAAHYLASAIDRAALPQVVGTIAGDDTILVVAREPTTGAQLAGMFENLR</sequence>
<reference key="1">
    <citation type="journal article" date="2008" name="PLoS ONE">
        <title>Genetic basis of virulence attenuation revealed by comparative genomic analysis of Mycobacterium tuberculosis strain H37Ra versus H37Rv.</title>
        <authorList>
            <person name="Zheng H."/>
            <person name="Lu L."/>
            <person name="Wang B."/>
            <person name="Pu S."/>
            <person name="Zhang X."/>
            <person name="Zhu G."/>
            <person name="Shi W."/>
            <person name="Zhang L."/>
            <person name="Wang H."/>
            <person name="Wang S."/>
            <person name="Zhao G."/>
            <person name="Zhang Y."/>
        </authorList>
    </citation>
    <scope>NUCLEOTIDE SEQUENCE [LARGE SCALE GENOMIC DNA]</scope>
    <source>
        <strain>ATCC 25177 / H37Ra</strain>
    </source>
</reference>
<keyword id="KW-0028">Amino-acid biosynthesis</keyword>
<keyword id="KW-0055">Arginine biosynthesis</keyword>
<keyword id="KW-0963">Cytoplasm</keyword>
<keyword id="KW-0238">DNA-binding</keyword>
<keyword id="KW-1185">Reference proteome</keyword>
<keyword id="KW-0678">Repressor</keyword>
<keyword id="KW-0804">Transcription</keyword>
<keyword id="KW-0805">Transcription regulation</keyword>
<feature type="chain" id="PRO_1000023581" description="Arginine repressor">
    <location>
        <begin position="1"/>
        <end position="170"/>
    </location>
</feature>
<accession>A5U314</accession>